<evidence type="ECO:0000250" key="1"/>
<evidence type="ECO:0000269" key="2">
    <source>
    </source>
</evidence>
<evidence type="ECO:0000269" key="3">
    <source>
    </source>
</evidence>
<evidence type="ECO:0000269" key="4">
    <source>
    </source>
</evidence>
<evidence type="ECO:0000305" key="5"/>
<name>UBIH_ECOLI</name>
<protein>
    <recommendedName>
        <fullName>2-octaprenyl-6-methoxyphenol hydroxylase</fullName>
        <ecNumber>1.14.13.-</ecNumber>
    </recommendedName>
</protein>
<accession>P25534</accession>
<accession>Q2M9T4</accession>
<gene>
    <name type="primary">ubiH</name>
    <name type="synonym">visB</name>
    <name type="ordered locus">b2907</name>
    <name type="ordered locus">JW2875</name>
</gene>
<proteinExistence type="evidence at protein level"/>
<reference key="1">
    <citation type="journal article" date="1992" name="J. Bacteriol.">
        <title>Isolation and characterization of a light-sensitive mutant of Escherichia coli K-12 with a mutation in a gene that is required for the biosynthesis of ubiquinone.</title>
        <authorList>
            <person name="Nakahigashi K."/>
            <person name="Miyamoto K."/>
            <person name="Nishimura K."/>
            <person name="Inokuchi H."/>
        </authorList>
    </citation>
    <scope>NUCLEOTIDE SEQUENCE [GENOMIC DNA]</scope>
    <scope>DISRUPTION PHENOTYPE</scope>
    <source>
        <strain>K12</strain>
    </source>
</reference>
<reference key="2">
    <citation type="journal article" date="1997" name="Science">
        <title>The complete genome sequence of Escherichia coli K-12.</title>
        <authorList>
            <person name="Blattner F.R."/>
            <person name="Plunkett G. III"/>
            <person name="Bloch C.A."/>
            <person name="Perna N.T."/>
            <person name="Burland V."/>
            <person name="Riley M."/>
            <person name="Collado-Vides J."/>
            <person name="Glasner J.D."/>
            <person name="Rode C.K."/>
            <person name="Mayhew G.F."/>
            <person name="Gregor J."/>
            <person name="Davis N.W."/>
            <person name="Kirkpatrick H.A."/>
            <person name="Goeden M.A."/>
            <person name="Rose D.J."/>
            <person name="Mau B."/>
            <person name="Shao Y."/>
        </authorList>
    </citation>
    <scope>NUCLEOTIDE SEQUENCE [LARGE SCALE GENOMIC DNA]</scope>
    <source>
        <strain>K12 / MG1655 / ATCC 47076</strain>
    </source>
</reference>
<reference key="3">
    <citation type="journal article" date="2006" name="Mol. Syst. Biol.">
        <title>Highly accurate genome sequences of Escherichia coli K-12 strains MG1655 and W3110.</title>
        <authorList>
            <person name="Hayashi K."/>
            <person name="Morooka N."/>
            <person name="Yamamoto Y."/>
            <person name="Fujita K."/>
            <person name="Isono K."/>
            <person name="Choi S."/>
            <person name="Ohtsubo E."/>
            <person name="Baba T."/>
            <person name="Wanner B.L."/>
            <person name="Mori H."/>
            <person name="Horiuchi T."/>
        </authorList>
    </citation>
    <scope>NUCLEOTIDE SEQUENCE [LARGE SCALE GENOMIC DNA]</scope>
    <source>
        <strain>K12 / W3110 / ATCC 27325 / DSM 5911</strain>
    </source>
</reference>
<reference key="4">
    <citation type="journal article" date="1973" name="J. Bacteriol.">
        <title>Pathway for ubiquinone biosynthesis in Escherichia coli K-12: gene-enzyme relationships and intermediates.</title>
        <authorList>
            <person name="Young I.G."/>
            <person name="Stroobant P."/>
            <person name="Macdonald C.G."/>
            <person name="Gibson F."/>
        </authorList>
    </citation>
    <scope>FUNCTION IN UBIQUINONE BIOSYNTHESIS</scope>
    <scope>DISRUPTION PHENOTYPE</scope>
    <source>
        <strain>K12</strain>
    </source>
</reference>
<reference key="5">
    <citation type="journal article" date="2019" name="Cell Chem. Biol.">
        <title>A soluble metabolon synthesizes the isoprenoid lipid ubiquinone.</title>
        <authorList>
            <person name="Hajj Chehade M."/>
            <person name="Pelosi L."/>
            <person name="Fyfe C.D."/>
            <person name="Loiseau L."/>
            <person name="Rascalou B."/>
            <person name="Brugiere S."/>
            <person name="Kazemzadeh K."/>
            <person name="Vo C.D."/>
            <person name="Ciccone L."/>
            <person name="Aussel L."/>
            <person name="Coute Y."/>
            <person name="Fontecave M."/>
            <person name="Barras F."/>
            <person name="Lombard M."/>
            <person name="Pierrel F."/>
        </authorList>
    </citation>
    <scope>SUBUNIT</scope>
    <scope>SUBCELLULAR LOCATION</scope>
</reference>
<dbReference type="EC" id="1.14.13.-"/>
<dbReference type="EMBL" id="D90281">
    <property type="protein sequence ID" value="BAA14326.1"/>
    <property type="molecule type" value="Genomic_DNA"/>
</dbReference>
<dbReference type="EMBL" id="U28377">
    <property type="protein sequence ID" value="AAA69075.1"/>
    <property type="molecule type" value="Genomic_DNA"/>
</dbReference>
<dbReference type="EMBL" id="U00096">
    <property type="protein sequence ID" value="AAC75945.1"/>
    <property type="molecule type" value="Genomic_DNA"/>
</dbReference>
<dbReference type="EMBL" id="AP009048">
    <property type="protein sequence ID" value="BAE76972.1"/>
    <property type="molecule type" value="Genomic_DNA"/>
</dbReference>
<dbReference type="PIR" id="C65075">
    <property type="entry name" value="C65075"/>
</dbReference>
<dbReference type="RefSeq" id="NP_417383.1">
    <property type="nucleotide sequence ID" value="NC_000913.3"/>
</dbReference>
<dbReference type="RefSeq" id="WP_000111195.1">
    <property type="nucleotide sequence ID" value="NZ_LN832404.1"/>
</dbReference>
<dbReference type="SMR" id="P25534"/>
<dbReference type="BioGRID" id="4262345">
    <property type="interactions" value="378"/>
</dbReference>
<dbReference type="BioGRID" id="851710">
    <property type="interactions" value="7"/>
</dbReference>
<dbReference type="DIP" id="DIP-11071N"/>
<dbReference type="FunCoup" id="P25534">
    <property type="interactions" value="181"/>
</dbReference>
<dbReference type="IntAct" id="P25534">
    <property type="interactions" value="13"/>
</dbReference>
<dbReference type="STRING" id="511145.b2907"/>
<dbReference type="jPOST" id="P25534"/>
<dbReference type="PaxDb" id="511145-b2907"/>
<dbReference type="EnsemblBacteria" id="AAC75945">
    <property type="protein sequence ID" value="AAC75945"/>
    <property type="gene ID" value="b2907"/>
</dbReference>
<dbReference type="GeneID" id="947388"/>
<dbReference type="KEGG" id="ecj:JW2875"/>
<dbReference type="KEGG" id="eco:b2907"/>
<dbReference type="KEGG" id="ecoc:C3026_15935"/>
<dbReference type="PATRIC" id="fig|1411691.4.peg.3825"/>
<dbReference type="EchoBASE" id="EB1300"/>
<dbReference type="eggNOG" id="COG0654">
    <property type="taxonomic scope" value="Bacteria"/>
</dbReference>
<dbReference type="HOGENOM" id="CLU_009665_8_1_6"/>
<dbReference type="InParanoid" id="P25534"/>
<dbReference type="OMA" id="WFARQAM"/>
<dbReference type="OrthoDB" id="9769565at2"/>
<dbReference type="PhylomeDB" id="P25534"/>
<dbReference type="BioCyc" id="EcoCyc:OCTAPRENYL-METHOXYPHENOL-OH-MONOMER"/>
<dbReference type="BioCyc" id="MetaCyc:OCTAPRENYL-METHOXYPHENOL-OH-MONOMER"/>
<dbReference type="BRENDA" id="1.14.99.B5">
    <property type="organism ID" value="2026"/>
</dbReference>
<dbReference type="UniPathway" id="UPA00232"/>
<dbReference type="PRO" id="PR:P25534"/>
<dbReference type="Proteomes" id="UP000000625">
    <property type="component" value="Chromosome"/>
</dbReference>
<dbReference type="GO" id="GO:0005737">
    <property type="term" value="C:cytoplasm"/>
    <property type="evidence" value="ECO:0007669"/>
    <property type="project" value="UniProtKB-SubCell"/>
</dbReference>
<dbReference type="GO" id="GO:0110142">
    <property type="term" value="C:ubiquinone biosynthesis complex"/>
    <property type="evidence" value="ECO:0000314"/>
    <property type="project" value="EcoCyc"/>
</dbReference>
<dbReference type="GO" id="GO:0008681">
    <property type="term" value="F:2-octaprenyl-6-methoxyphenol hydroxylase activity"/>
    <property type="evidence" value="ECO:0000315"/>
    <property type="project" value="EcoCyc"/>
</dbReference>
<dbReference type="GO" id="GO:0071949">
    <property type="term" value="F:FAD binding"/>
    <property type="evidence" value="ECO:0007669"/>
    <property type="project" value="InterPro"/>
</dbReference>
<dbReference type="GO" id="GO:0009416">
    <property type="term" value="P:response to light stimulus"/>
    <property type="evidence" value="ECO:0000315"/>
    <property type="project" value="EcoliWiki"/>
</dbReference>
<dbReference type="GO" id="GO:0006979">
    <property type="term" value="P:response to oxidative stress"/>
    <property type="evidence" value="ECO:0000315"/>
    <property type="project" value="EcoliWiki"/>
</dbReference>
<dbReference type="GO" id="GO:0006744">
    <property type="term" value="P:ubiquinone biosynthetic process"/>
    <property type="evidence" value="ECO:0000315"/>
    <property type="project" value="EcoCyc"/>
</dbReference>
<dbReference type="FunFam" id="3.50.50.60:FF:000123">
    <property type="entry name" value="2-octaprenyl-6-methoxyphenyl hydroxylase"/>
    <property type="match status" value="1"/>
</dbReference>
<dbReference type="FunFam" id="3.50.50.60:FF:000021">
    <property type="entry name" value="Ubiquinone biosynthesis monooxygenase COQ6"/>
    <property type="match status" value="1"/>
</dbReference>
<dbReference type="Gene3D" id="3.50.50.60">
    <property type="entry name" value="FAD/NAD(P)-binding domain"/>
    <property type="match status" value="2"/>
</dbReference>
<dbReference type="InterPro" id="IPR002938">
    <property type="entry name" value="FAD-bd"/>
</dbReference>
<dbReference type="InterPro" id="IPR036188">
    <property type="entry name" value="FAD/NAD-bd_sf"/>
</dbReference>
<dbReference type="InterPro" id="IPR018168">
    <property type="entry name" value="Ubi_Hdrlase_CS"/>
</dbReference>
<dbReference type="InterPro" id="IPR011295">
    <property type="entry name" value="UbiH"/>
</dbReference>
<dbReference type="InterPro" id="IPR010971">
    <property type="entry name" value="UbiH/COQ6"/>
</dbReference>
<dbReference type="InterPro" id="IPR051205">
    <property type="entry name" value="UbiH/COQ6_monooxygenase"/>
</dbReference>
<dbReference type="NCBIfam" id="NF004356">
    <property type="entry name" value="PRK05732.1"/>
    <property type="match status" value="1"/>
</dbReference>
<dbReference type="NCBIfam" id="TIGR01988">
    <property type="entry name" value="Ubi-OHases"/>
    <property type="match status" value="1"/>
</dbReference>
<dbReference type="NCBIfam" id="TIGR01984">
    <property type="entry name" value="UbiH"/>
    <property type="match status" value="1"/>
</dbReference>
<dbReference type="PANTHER" id="PTHR43876:SF8">
    <property type="entry name" value="2-OCTAPRENYL-6-METHOXYPHENOL HYDROXYLASE"/>
    <property type="match status" value="1"/>
</dbReference>
<dbReference type="PANTHER" id="PTHR43876">
    <property type="entry name" value="UBIQUINONE BIOSYNTHESIS MONOOXYGENASE COQ6, MITOCHONDRIAL"/>
    <property type="match status" value="1"/>
</dbReference>
<dbReference type="Pfam" id="PF01494">
    <property type="entry name" value="FAD_binding_3"/>
    <property type="match status" value="1"/>
</dbReference>
<dbReference type="PRINTS" id="PR00420">
    <property type="entry name" value="RNGMNOXGNASE"/>
</dbReference>
<dbReference type="SUPFAM" id="SSF51905">
    <property type="entry name" value="FAD/NAD(P)-binding domain"/>
    <property type="match status" value="1"/>
</dbReference>
<dbReference type="PROSITE" id="PS01304">
    <property type="entry name" value="UBIH"/>
    <property type="match status" value="1"/>
</dbReference>
<keyword id="KW-0963">Cytoplasm</keyword>
<keyword id="KW-0274">FAD</keyword>
<keyword id="KW-0285">Flavoprotein</keyword>
<keyword id="KW-0503">Monooxygenase</keyword>
<keyword id="KW-0560">Oxidoreductase</keyword>
<keyword id="KW-1185">Reference proteome</keyword>
<keyword id="KW-0831">Ubiquinone biosynthesis</keyword>
<comment type="function">
    <text evidence="4">Is likely an oxygenase that introduces the hydroxyl group at carbon four of 2-octaprenyl-6-methoxyphenol resulting in the formation of 2-octaprenyl-6-methoxy-1,4-benzoquinol.</text>
</comment>
<comment type="cofactor">
    <cofactor evidence="1">
        <name>FAD</name>
        <dbReference type="ChEBI" id="CHEBI:57692"/>
    </cofactor>
</comment>
<comment type="pathway">
    <text>Cofactor biosynthesis; ubiquinone biosynthesis.</text>
</comment>
<comment type="subunit">
    <text evidence="3">Component of the Ubi complex metabolon, which regroups five ubiquinone biosynthesis proteins (UbiE, UbiF, UbiG, UbiH and UbiI) and two accessory factors (UbiK and the lipid-binding protein UbiJ).</text>
</comment>
<comment type="interaction">
    <interactant intactId="EBI-559377">
        <id>P25534</id>
    </interactant>
    <interactant intactId="EBI-543760">
        <id>P67910</id>
        <label>hldD</label>
    </interactant>
    <organismsDiffer>false</organismsDiffer>
    <experiments>2</experiments>
</comment>
<comment type="subcellular location">
    <subcellularLocation>
        <location evidence="3">Cytoplasm</location>
    </subcellularLocation>
</comment>
<comment type="disruption phenotype">
    <text evidence="2 4">Cells lacking this gene are photosensitive and are not able to grow with a nonfermentable source of carbon. They also fail to produce ubiquinone, and accumulate 2-octaprenylphenol and 2-octaprenyl-6-methoxyphenol.</text>
</comment>
<comment type="similarity">
    <text evidence="5">Belongs to the UbiH/COQ6 family.</text>
</comment>
<feature type="chain" id="PRO_0000207579" description="2-octaprenyl-6-methoxyphenol hydroxylase">
    <location>
        <begin position="1"/>
        <end position="392"/>
    </location>
</feature>
<feature type="sequence conflict" description="In Ref. 1; BAA14326." evidence="5" ref="1">
    <original>L</original>
    <variation>V</variation>
    <location>
        <position position="382"/>
    </location>
</feature>
<organism>
    <name type="scientific">Escherichia coli (strain K12)</name>
    <dbReference type="NCBI Taxonomy" id="83333"/>
    <lineage>
        <taxon>Bacteria</taxon>
        <taxon>Pseudomonadati</taxon>
        <taxon>Pseudomonadota</taxon>
        <taxon>Gammaproteobacteria</taxon>
        <taxon>Enterobacterales</taxon>
        <taxon>Enterobacteriaceae</taxon>
        <taxon>Escherichia</taxon>
    </lineage>
</organism>
<sequence length="392" mass="42288">MSVIIVGGGMAGATLALAISRLSHGALPVHLIEATAPESHAHPGFDGRAIALAAGTCQQLARIGVWQSLADCATAITTVHVSDRGHAGFVTLAAEDYQLAALGQVVELHNVGQRLFALLRKAPGVTLHCPDRVANVARTQSHVEVTLESGETLTGRVLVAADGTHSALATACGVDWQQEPYEQLAVIANVATSVAHEGRAFERFTQHGPLAMLPMSDGRCSLVWCHPLERREEVLSWSDEKFCRELQSAFGWRLGKITHAGKRSAYPLALTHAARSITHRTVLVGNAAQTLHPIAGQGFNLGMRDVMSLAETLTQAQERGEDMGDYGVLCRYQQRRQSDREATIGVTDSLVHLFANRWAPLVVGRNIGLMTMELFTPARDVLAQRTLGWVAR</sequence>